<sequence>MPILVIVRHGQSEWNLKNLFTGWSDVELTPTGEHEAEYAGIVLRPYHFDIAFTSVLKRAIHTLSIILNQTGATIPIIENEALNERNYGDLQGLNKAEVGEKYGAQQLIAWRRSYTEVPPGGESLENTCQRVIPYYQEKIEPELKDGRNVLIVAHGNSLRALMMHLEKISPEDIAHVDLATGAPRLYEFSSKLDLNSVSYIKLPETPLDVSTLL</sequence>
<dbReference type="EC" id="5.4.2.11" evidence="1"/>
<dbReference type="EMBL" id="CP000383">
    <property type="protein sequence ID" value="ABG59513.1"/>
    <property type="molecule type" value="Genomic_DNA"/>
</dbReference>
<dbReference type="RefSeq" id="WP_011585630.1">
    <property type="nucleotide sequence ID" value="NC_008255.1"/>
</dbReference>
<dbReference type="SMR" id="Q11SV1"/>
<dbReference type="STRING" id="269798.CHU_2250"/>
<dbReference type="KEGG" id="chu:CHU_2250"/>
<dbReference type="eggNOG" id="COG0588">
    <property type="taxonomic scope" value="Bacteria"/>
</dbReference>
<dbReference type="HOGENOM" id="CLU_033323_1_4_10"/>
<dbReference type="OrthoDB" id="9782128at2"/>
<dbReference type="UniPathway" id="UPA00109">
    <property type="reaction ID" value="UER00186"/>
</dbReference>
<dbReference type="Proteomes" id="UP000001822">
    <property type="component" value="Chromosome"/>
</dbReference>
<dbReference type="GO" id="GO:0004619">
    <property type="term" value="F:phosphoglycerate mutase activity"/>
    <property type="evidence" value="ECO:0007669"/>
    <property type="project" value="UniProtKB-EC"/>
</dbReference>
<dbReference type="GO" id="GO:0006094">
    <property type="term" value="P:gluconeogenesis"/>
    <property type="evidence" value="ECO:0007669"/>
    <property type="project" value="UniProtKB-UniRule"/>
</dbReference>
<dbReference type="GO" id="GO:0006096">
    <property type="term" value="P:glycolytic process"/>
    <property type="evidence" value="ECO:0007669"/>
    <property type="project" value="UniProtKB-UniRule"/>
</dbReference>
<dbReference type="CDD" id="cd07067">
    <property type="entry name" value="HP_PGM_like"/>
    <property type="match status" value="1"/>
</dbReference>
<dbReference type="Gene3D" id="3.40.50.1240">
    <property type="entry name" value="Phosphoglycerate mutase-like"/>
    <property type="match status" value="1"/>
</dbReference>
<dbReference type="HAMAP" id="MF_01039">
    <property type="entry name" value="PGAM_GpmA"/>
    <property type="match status" value="1"/>
</dbReference>
<dbReference type="InterPro" id="IPR013078">
    <property type="entry name" value="His_Pase_superF_clade-1"/>
</dbReference>
<dbReference type="InterPro" id="IPR029033">
    <property type="entry name" value="His_PPase_superfam"/>
</dbReference>
<dbReference type="InterPro" id="IPR001345">
    <property type="entry name" value="PG/BPGM_mutase_AS"/>
</dbReference>
<dbReference type="InterPro" id="IPR005952">
    <property type="entry name" value="Phosphogly_mut1"/>
</dbReference>
<dbReference type="NCBIfam" id="TIGR01258">
    <property type="entry name" value="pgm_1"/>
    <property type="match status" value="2"/>
</dbReference>
<dbReference type="PANTHER" id="PTHR11931">
    <property type="entry name" value="PHOSPHOGLYCERATE MUTASE"/>
    <property type="match status" value="1"/>
</dbReference>
<dbReference type="Pfam" id="PF00300">
    <property type="entry name" value="His_Phos_1"/>
    <property type="match status" value="1"/>
</dbReference>
<dbReference type="PIRSF" id="PIRSF000709">
    <property type="entry name" value="6PFK_2-Ptase"/>
    <property type="match status" value="1"/>
</dbReference>
<dbReference type="SMART" id="SM00855">
    <property type="entry name" value="PGAM"/>
    <property type="match status" value="1"/>
</dbReference>
<dbReference type="SUPFAM" id="SSF53254">
    <property type="entry name" value="Phosphoglycerate mutase-like"/>
    <property type="match status" value="1"/>
</dbReference>
<dbReference type="PROSITE" id="PS00175">
    <property type="entry name" value="PG_MUTASE"/>
    <property type="match status" value="1"/>
</dbReference>
<keyword id="KW-0312">Gluconeogenesis</keyword>
<keyword id="KW-0324">Glycolysis</keyword>
<keyword id="KW-0413">Isomerase</keyword>
<keyword id="KW-1185">Reference proteome</keyword>
<comment type="function">
    <text evidence="1">Catalyzes the interconversion of 2-phosphoglycerate and 3-phosphoglycerate.</text>
</comment>
<comment type="catalytic activity">
    <reaction evidence="1">
        <text>(2R)-2-phosphoglycerate = (2R)-3-phosphoglycerate</text>
        <dbReference type="Rhea" id="RHEA:15901"/>
        <dbReference type="ChEBI" id="CHEBI:58272"/>
        <dbReference type="ChEBI" id="CHEBI:58289"/>
        <dbReference type="EC" id="5.4.2.11"/>
    </reaction>
</comment>
<comment type="pathway">
    <text evidence="1">Carbohydrate degradation; glycolysis; pyruvate from D-glyceraldehyde 3-phosphate: step 3/5.</text>
</comment>
<comment type="similarity">
    <text evidence="1">Belongs to the phosphoglycerate mutase family. BPG-dependent PGAM subfamily.</text>
</comment>
<evidence type="ECO:0000255" key="1">
    <source>
        <dbReference type="HAMAP-Rule" id="MF_01039"/>
    </source>
</evidence>
<protein>
    <recommendedName>
        <fullName evidence="1">2,3-bisphosphoglycerate-dependent phosphoglycerate mutase</fullName>
        <shortName evidence="1">BPG-dependent PGAM</shortName>
        <shortName evidence="1">PGAM</shortName>
        <shortName evidence="1">Phosphoglyceromutase</shortName>
        <shortName evidence="1">dPGM</shortName>
        <ecNumber evidence="1">5.4.2.11</ecNumber>
    </recommendedName>
</protein>
<proteinExistence type="inferred from homology"/>
<name>GPMA_CYTH3</name>
<organism>
    <name type="scientific">Cytophaga hutchinsonii (strain ATCC 33406 / DSM 1761 / CIP 103989 / NBRC 15051 / NCIMB 9469 / D465)</name>
    <dbReference type="NCBI Taxonomy" id="269798"/>
    <lineage>
        <taxon>Bacteria</taxon>
        <taxon>Pseudomonadati</taxon>
        <taxon>Bacteroidota</taxon>
        <taxon>Cytophagia</taxon>
        <taxon>Cytophagales</taxon>
        <taxon>Cytophagaceae</taxon>
        <taxon>Cytophaga</taxon>
    </lineage>
</organism>
<feature type="chain" id="PRO_1000064051" description="2,3-bisphosphoglycerate-dependent phosphoglycerate mutase">
    <location>
        <begin position="1"/>
        <end position="213"/>
    </location>
</feature>
<feature type="active site" description="Tele-phosphohistidine intermediate" evidence="1">
    <location>
        <position position="9"/>
    </location>
</feature>
<feature type="active site" description="Proton donor/acceptor" evidence="1">
    <location>
        <position position="84"/>
    </location>
</feature>
<feature type="binding site" evidence="1">
    <location>
        <begin position="8"/>
        <end position="15"/>
    </location>
    <ligand>
        <name>substrate</name>
    </ligand>
</feature>
<feature type="binding site" evidence="1">
    <location>
        <begin position="21"/>
        <end position="22"/>
    </location>
    <ligand>
        <name>substrate</name>
    </ligand>
</feature>
<feature type="binding site" evidence="1">
    <location>
        <position position="58"/>
    </location>
    <ligand>
        <name>substrate</name>
    </ligand>
</feature>
<feature type="binding site" evidence="1">
    <location>
        <begin position="84"/>
        <end position="87"/>
    </location>
    <ligand>
        <name>substrate</name>
    </ligand>
</feature>
<feature type="binding site" evidence="1">
    <location>
        <position position="95"/>
    </location>
    <ligand>
        <name>substrate</name>
    </ligand>
</feature>
<feature type="binding site" evidence="1">
    <location>
        <begin position="111"/>
        <end position="112"/>
    </location>
    <ligand>
        <name>substrate</name>
    </ligand>
</feature>
<feature type="binding site" evidence="1">
    <location>
        <begin position="155"/>
        <end position="156"/>
    </location>
    <ligand>
        <name>substrate</name>
    </ligand>
</feature>
<feature type="site" description="Transition state stabilizer" evidence="1">
    <location>
        <position position="154"/>
    </location>
</feature>
<reference key="1">
    <citation type="journal article" date="2007" name="Appl. Environ. Microbiol.">
        <title>Genome sequence of the cellulolytic gliding bacterium Cytophaga hutchinsonii.</title>
        <authorList>
            <person name="Xie G."/>
            <person name="Bruce D.C."/>
            <person name="Challacombe J.F."/>
            <person name="Chertkov O."/>
            <person name="Detter J.C."/>
            <person name="Gilna P."/>
            <person name="Han C.S."/>
            <person name="Lucas S."/>
            <person name="Misra M."/>
            <person name="Myers G.L."/>
            <person name="Richardson P."/>
            <person name="Tapia R."/>
            <person name="Thayer N."/>
            <person name="Thompson L.S."/>
            <person name="Brettin T.S."/>
            <person name="Henrissat B."/>
            <person name="Wilson D.B."/>
            <person name="McBride M.J."/>
        </authorList>
    </citation>
    <scope>NUCLEOTIDE SEQUENCE [LARGE SCALE GENOMIC DNA]</scope>
    <source>
        <strain>ATCC 33406 / DSM 1761 / JCM 20678 / CIP 103989 / IAM 12607 / NBRC 15051 / NCIMB 9469 / D465</strain>
    </source>
</reference>
<accession>Q11SV1</accession>
<gene>
    <name evidence="1" type="primary">gpmA</name>
    <name type="ordered locus">CHU_2250</name>
</gene>